<sequence>MITVTNARKNYGNFAALDDVTIEIPSGELTALLGPSGSGKSTLLRSIAGLEALDDGVVVIAGKDVTRVAPQKRDIGFVFQHYAAFKHMTVRDNVAFGLKIRKRPKAEITKRVDELLGIVGLDGFQHRYPAQLSGGQRQRMALARALAVDPQVLLLDEPFGALDAKVRADLRTWLRRLHEEVHVTTVLVTHDQEEALDVADRIAVMNKGRIEQVGTPEDVYDRPANEFVMSFLGDVARLNGHLVRPHDIRVGRDPSMALAAHEGTAESAGVTRATVERVVHLGFEVRVELRNAATGDLFSAQVTRGDAEALRLTDGETVYARATRIPELPTQ</sequence>
<evidence type="ECO:0000255" key="1">
    <source>
        <dbReference type="HAMAP-Rule" id="MF_01701"/>
    </source>
</evidence>
<name>CYSA_NOCFA</name>
<feature type="chain" id="PRO_0000092280" description="Sulfate/thiosulfate import ATP-binding protein CysA">
    <location>
        <begin position="1"/>
        <end position="331"/>
    </location>
</feature>
<feature type="domain" description="ABC transporter" evidence="1">
    <location>
        <begin position="2"/>
        <end position="232"/>
    </location>
</feature>
<feature type="binding site" evidence="1">
    <location>
        <begin position="34"/>
        <end position="41"/>
    </location>
    <ligand>
        <name>ATP</name>
        <dbReference type="ChEBI" id="CHEBI:30616"/>
    </ligand>
</feature>
<protein>
    <recommendedName>
        <fullName evidence="1">Sulfate/thiosulfate import ATP-binding protein CysA</fullName>
        <ecNumber evidence="1">7.3.2.3</ecNumber>
    </recommendedName>
    <alternativeName>
        <fullName evidence="1">Sulfate-transporting ATPase</fullName>
    </alternativeName>
</protein>
<reference key="1">
    <citation type="journal article" date="2004" name="Proc. Natl. Acad. Sci. U.S.A.">
        <title>The complete genomic sequence of Nocardia farcinica IFM 10152.</title>
        <authorList>
            <person name="Ishikawa J."/>
            <person name="Yamashita A."/>
            <person name="Mikami Y."/>
            <person name="Hoshino Y."/>
            <person name="Kurita H."/>
            <person name="Hotta K."/>
            <person name="Shiba T."/>
            <person name="Hattori M."/>
        </authorList>
    </citation>
    <scope>NUCLEOTIDE SEQUENCE [LARGE SCALE GENOMIC DNA]</scope>
    <source>
        <strain>IFM 10152</strain>
    </source>
</reference>
<proteinExistence type="inferred from homology"/>
<gene>
    <name evidence="1" type="primary">cysA</name>
    <name type="ordered locus">NFA_14070</name>
</gene>
<accession>Q5YZY9</accession>
<organism>
    <name type="scientific">Nocardia farcinica (strain IFM 10152)</name>
    <dbReference type="NCBI Taxonomy" id="247156"/>
    <lineage>
        <taxon>Bacteria</taxon>
        <taxon>Bacillati</taxon>
        <taxon>Actinomycetota</taxon>
        <taxon>Actinomycetes</taxon>
        <taxon>Mycobacteriales</taxon>
        <taxon>Nocardiaceae</taxon>
        <taxon>Nocardia</taxon>
    </lineage>
</organism>
<dbReference type="EC" id="7.3.2.3" evidence="1"/>
<dbReference type="EMBL" id="AP006618">
    <property type="protein sequence ID" value="BAD56252.1"/>
    <property type="molecule type" value="Genomic_DNA"/>
</dbReference>
<dbReference type="RefSeq" id="WP_011207937.1">
    <property type="nucleotide sequence ID" value="NC_006361.1"/>
</dbReference>
<dbReference type="SMR" id="Q5YZY9"/>
<dbReference type="STRING" id="247156.NFA_14070"/>
<dbReference type="GeneID" id="61132225"/>
<dbReference type="KEGG" id="nfa:NFA_14070"/>
<dbReference type="eggNOG" id="COG3842">
    <property type="taxonomic scope" value="Bacteria"/>
</dbReference>
<dbReference type="HOGENOM" id="CLU_000604_1_1_11"/>
<dbReference type="OrthoDB" id="9802264at2"/>
<dbReference type="Proteomes" id="UP000006820">
    <property type="component" value="Chromosome"/>
</dbReference>
<dbReference type="GO" id="GO:0043190">
    <property type="term" value="C:ATP-binding cassette (ABC) transporter complex"/>
    <property type="evidence" value="ECO:0007669"/>
    <property type="project" value="InterPro"/>
</dbReference>
<dbReference type="GO" id="GO:0015419">
    <property type="term" value="F:ABC-type sulfate transporter activity"/>
    <property type="evidence" value="ECO:0007669"/>
    <property type="project" value="InterPro"/>
</dbReference>
<dbReference type="GO" id="GO:0102025">
    <property type="term" value="F:ABC-type thiosulfate transporter activity"/>
    <property type="evidence" value="ECO:0007669"/>
    <property type="project" value="RHEA"/>
</dbReference>
<dbReference type="GO" id="GO:0005524">
    <property type="term" value="F:ATP binding"/>
    <property type="evidence" value="ECO:0007669"/>
    <property type="project" value="UniProtKB-KW"/>
</dbReference>
<dbReference type="GO" id="GO:0016887">
    <property type="term" value="F:ATP hydrolysis activity"/>
    <property type="evidence" value="ECO:0007669"/>
    <property type="project" value="InterPro"/>
</dbReference>
<dbReference type="CDD" id="cd03296">
    <property type="entry name" value="ABC_CysA_sulfate_importer"/>
    <property type="match status" value="1"/>
</dbReference>
<dbReference type="FunFam" id="3.40.50.300:FF:001655">
    <property type="entry name" value="Sulfate/thiosulfate import ATP-binding protein CysA"/>
    <property type="match status" value="1"/>
</dbReference>
<dbReference type="Gene3D" id="3.40.50.300">
    <property type="entry name" value="P-loop containing nucleotide triphosphate hydrolases"/>
    <property type="match status" value="1"/>
</dbReference>
<dbReference type="InterPro" id="IPR003593">
    <property type="entry name" value="AAA+_ATPase"/>
</dbReference>
<dbReference type="InterPro" id="IPR050093">
    <property type="entry name" value="ABC_SmlMolc_Importer"/>
</dbReference>
<dbReference type="InterPro" id="IPR003439">
    <property type="entry name" value="ABC_transporter-like_ATP-bd"/>
</dbReference>
<dbReference type="InterPro" id="IPR017871">
    <property type="entry name" value="ABC_transporter-like_CS"/>
</dbReference>
<dbReference type="InterPro" id="IPR008995">
    <property type="entry name" value="Mo/tungstate-bd_C_term_dom"/>
</dbReference>
<dbReference type="InterPro" id="IPR027417">
    <property type="entry name" value="P-loop_NTPase"/>
</dbReference>
<dbReference type="InterPro" id="IPR005666">
    <property type="entry name" value="Sulph_transpt1"/>
</dbReference>
<dbReference type="InterPro" id="IPR024765">
    <property type="entry name" value="TOBE-like"/>
</dbReference>
<dbReference type="NCBIfam" id="TIGR00968">
    <property type="entry name" value="3a0106s01"/>
    <property type="match status" value="1"/>
</dbReference>
<dbReference type="PANTHER" id="PTHR42781">
    <property type="entry name" value="SPERMIDINE/PUTRESCINE IMPORT ATP-BINDING PROTEIN POTA"/>
    <property type="match status" value="1"/>
</dbReference>
<dbReference type="PANTHER" id="PTHR42781:SF4">
    <property type="entry name" value="SPERMIDINE_PUTRESCINE IMPORT ATP-BINDING PROTEIN POTA"/>
    <property type="match status" value="1"/>
</dbReference>
<dbReference type="Pfam" id="PF00005">
    <property type="entry name" value="ABC_tran"/>
    <property type="match status" value="1"/>
</dbReference>
<dbReference type="Pfam" id="PF12857">
    <property type="entry name" value="TOBE_3"/>
    <property type="match status" value="1"/>
</dbReference>
<dbReference type="SMART" id="SM00382">
    <property type="entry name" value="AAA"/>
    <property type="match status" value="1"/>
</dbReference>
<dbReference type="SUPFAM" id="SSF50331">
    <property type="entry name" value="MOP-like"/>
    <property type="match status" value="1"/>
</dbReference>
<dbReference type="SUPFAM" id="SSF52540">
    <property type="entry name" value="P-loop containing nucleoside triphosphate hydrolases"/>
    <property type="match status" value="1"/>
</dbReference>
<dbReference type="PROSITE" id="PS00211">
    <property type="entry name" value="ABC_TRANSPORTER_1"/>
    <property type="match status" value="1"/>
</dbReference>
<dbReference type="PROSITE" id="PS50893">
    <property type="entry name" value="ABC_TRANSPORTER_2"/>
    <property type="match status" value="1"/>
</dbReference>
<dbReference type="PROSITE" id="PS51237">
    <property type="entry name" value="CYSA"/>
    <property type="match status" value="1"/>
</dbReference>
<comment type="function">
    <text evidence="1">Part of the ABC transporter complex CysAWTP involved in sulfate/thiosulfate import. Responsible for energy coupling to the transport system.</text>
</comment>
<comment type="catalytic activity">
    <reaction evidence="1">
        <text>sulfate(out) + ATP + H2O = sulfate(in) + ADP + phosphate + H(+)</text>
        <dbReference type="Rhea" id="RHEA:10192"/>
        <dbReference type="ChEBI" id="CHEBI:15377"/>
        <dbReference type="ChEBI" id="CHEBI:15378"/>
        <dbReference type="ChEBI" id="CHEBI:16189"/>
        <dbReference type="ChEBI" id="CHEBI:30616"/>
        <dbReference type="ChEBI" id="CHEBI:43474"/>
        <dbReference type="ChEBI" id="CHEBI:456216"/>
        <dbReference type="EC" id="7.3.2.3"/>
    </reaction>
</comment>
<comment type="catalytic activity">
    <reaction evidence="1">
        <text>thiosulfate(out) + ATP + H2O = thiosulfate(in) + ADP + phosphate + H(+)</text>
        <dbReference type="Rhea" id="RHEA:29871"/>
        <dbReference type="ChEBI" id="CHEBI:15377"/>
        <dbReference type="ChEBI" id="CHEBI:15378"/>
        <dbReference type="ChEBI" id="CHEBI:30616"/>
        <dbReference type="ChEBI" id="CHEBI:33542"/>
        <dbReference type="ChEBI" id="CHEBI:43474"/>
        <dbReference type="ChEBI" id="CHEBI:456216"/>
        <dbReference type="EC" id="7.3.2.3"/>
    </reaction>
</comment>
<comment type="subunit">
    <text evidence="1">The complex is composed of two ATP-binding proteins (CysA), two transmembrane proteins (CysT and CysW) and a solute-binding protein (CysP).</text>
</comment>
<comment type="subcellular location">
    <subcellularLocation>
        <location evidence="1">Cell membrane</location>
        <topology evidence="1">Peripheral membrane protein</topology>
    </subcellularLocation>
</comment>
<comment type="similarity">
    <text evidence="1">Belongs to the ABC transporter superfamily. Sulfate/tungstate importer (TC 3.A.1.6) family.</text>
</comment>
<keyword id="KW-0067">ATP-binding</keyword>
<keyword id="KW-1003">Cell membrane</keyword>
<keyword id="KW-0472">Membrane</keyword>
<keyword id="KW-0547">Nucleotide-binding</keyword>
<keyword id="KW-1185">Reference proteome</keyword>
<keyword id="KW-0764">Sulfate transport</keyword>
<keyword id="KW-1278">Translocase</keyword>
<keyword id="KW-0813">Transport</keyword>